<name>SPL_ARATH</name>
<keyword id="KW-0539">Nucleus</keyword>
<keyword id="KW-1185">Reference proteome</keyword>
<keyword id="KW-0678">Repressor</keyword>
<keyword id="KW-0804">Transcription</keyword>
<keyword id="KW-0805">Transcription regulation</keyword>
<dbReference type="EMBL" id="AF146794">
    <property type="protein sequence ID" value="AAD37775.1"/>
    <property type="molecule type" value="Genomic_DNA"/>
</dbReference>
<dbReference type="EMBL" id="AF159255">
    <property type="protein sequence ID" value="AAD45344.1"/>
    <property type="molecule type" value="mRNA"/>
</dbReference>
<dbReference type="EMBL" id="AL030978">
    <property type="protein sequence ID" value="CAA19727.1"/>
    <property type="molecule type" value="Genomic_DNA"/>
</dbReference>
<dbReference type="EMBL" id="AL078467">
    <property type="status" value="NOT_ANNOTATED_CDS"/>
    <property type="molecule type" value="Genomic_DNA"/>
</dbReference>
<dbReference type="EMBL" id="AL161566">
    <property type="protein sequence ID" value="CAB79588.1"/>
    <property type="molecule type" value="Genomic_DNA"/>
</dbReference>
<dbReference type="EMBL" id="CP002687">
    <property type="protein sequence ID" value="AEE85325.1"/>
    <property type="molecule type" value="Genomic_DNA"/>
</dbReference>
<dbReference type="EMBL" id="DQ446873">
    <property type="protein sequence ID" value="ABE66094.1"/>
    <property type="molecule type" value="mRNA"/>
</dbReference>
<dbReference type="EMBL" id="DQ653227">
    <property type="protein sequence ID" value="ABK28652.1"/>
    <property type="status" value="ALT_SEQ"/>
    <property type="molecule type" value="mRNA"/>
</dbReference>
<dbReference type="EMBL" id="AB493704">
    <property type="protein sequence ID" value="BAH30542.1"/>
    <property type="molecule type" value="mRNA"/>
</dbReference>
<dbReference type="PIR" id="T05757">
    <property type="entry name" value="T05757"/>
</dbReference>
<dbReference type="RefSeq" id="NP_194463.1">
    <property type="nucleotide sequence ID" value="NM_118867.2"/>
</dbReference>
<dbReference type="FunCoup" id="O81836">
    <property type="interactions" value="16"/>
</dbReference>
<dbReference type="IntAct" id="O81836">
    <property type="interactions" value="18"/>
</dbReference>
<dbReference type="STRING" id="3702.O81836"/>
<dbReference type="PaxDb" id="3702-AT4G27330.1"/>
<dbReference type="ProteomicsDB" id="245198"/>
<dbReference type="EnsemblPlants" id="AT4G27330.1">
    <property type="protein sequence ID" value="AT4G27330.1"/>
    <property type="gene ID" value="AT4G27330"/>
</dbReference>
<dbReference type="GeneID" id="828841"/>
<dbReference type="Gramene" id="AT4G27330.1">
    <property type="protein sequence ID" value="AT4G27330.1"/>
    <property type="gene ID" value="AT4G27330"/>
</dbReference>
<dbReference type="KEGG" id="ath:AT4G27330"/>
<dbReference type="Araport" id="AT4G27330"/>
<dbReference type="TAIR" id="AT4G27330">
    <property type="gene designation" value="SPL"/>
</dbReference>
<dbReference type="eggNOG" id="ENOG502R7KG">
    <property type="taxonomic scope" value="Eukaryota"/>
</dbReference>
<dbReference type="HOGENOM" id="CLU_881132_0_0_1"/>
<dbReference type="InParanoid" id="O81836"/>
<dbReference type="OMA" id="FSKYTMI"/>
<dbReference type="PhylomeDB" id="O81836"/>
<dbReference type="PRO" id="PR:O81836"/>
<dbReference type="Proteomes" id="UP000006548">
    <property type="component" value="Chromosome 4"/>
</dbReference>
<dbReference type="ExpressionAtlas" id="O81836">
    <property type="expression patterns" value="baseline and differential"/>
</dbReference>
<dbReference type="GO" id="GO:0005634">
    <property type="term" value="C:nucleus"/>
    <property type="evidence" value="ECO:0000314"/>
    <property type="project" value="TAIR"/>
</dbReference>
<dbReference type="GO" id="GO:0003700">
    <property type="term" value="F:DNA-binding transcription factor activity"/>
    <property type="evidence" value="ECO:0000315"/>
    <property type="project" value="TAIR"/>
</dbReference>
<dbReference type="GO" id="GO:0048653">
    <property type="term" value="P:anther development"/>
    <property type="evidence" value="ECO:0000315"/>
    <property type="project" value="TAIR"/>
</dbReference>
<dbReference type="GO" id="GO:0048533">
    <property type="term" value="P:sporocyte differentiation"/>
    <property type="evidence" value="ECO:0000315"/>
    <property type="project" value="TAIR"/>
</dbReference>
<dbReference type="InterPro" id="IPR014855">
    <property type="entry name" value="NOZZLE"/>
</dbReference>
<dbReference type="InterPro" id="IPR040356">
    <property type="entry name" value="SPEAR"/>
</dbReference>
<dbReference type="PANTHER" id="PTHR33388">
    <property type="entry name" value="OS01G0212500 PROTEIN"/>
    <property type="match status" value="1"/>
</dbReference>
<dbReference type="PANTHER" id="PTHR33388:SF2">
    <property type="entry name" value="PROTEIN SPOROCYTELESS"/>
    <property type="match status" value="1"/>
</dbReference>
<dbReference type="Pfam" id="PF08744">
    <property type="entry name" value="NOZZLE"/>
    <property type="match status" value="1"/>
</dbReference>
<feature type="chain" id="PRO_0000435870" description="Protein SPOROCYTELESS">
    <location>
        <begin position="1"/>
        <end position="314"/>
    </location>
</feature>
<feature type="region of interest" description="Disordered" evidence="1">
    <location>
        <begin position="1"/>
        <end position="20"/>
    </location>
</feature>
<feature type="region of interest" description="Disordered" evidence="1">
    <location>
        <begin position="33"/>
        <end position="62"/>
    </location>
</feature>
<feature type="short sequence motif" description="SPL" evidence="18">
    <location>
        <begin position="62"/>
        <end position="70"/>
    </location>
</feature>
<feature type="short sequence motif" description="EAR" evidence="18">
    <location>
        <begin position="308"/>
        <end position="314"/>
    </location>
</feature>
<feature type="compositionally biased region" description="Polar residues" evidence="1">
    <location>
        <begin position="1"/>
        <end position="17"/>
    </location>
</feature>
<feature type="mutagenesis site" description="Loss of interaction with TPL and loss of repression activity; when associated with A-312 and A-314." evidence="13">
    <original>L</original>
    <variation>A</variation>
    <location>
        <position position="310"/>
    </location>
</feature>
<feature type="mutagenesis site" description="Loss of interaction with TPL and loss of repression activity; when associated with A-310 and A-314." evidence="13">
    <original>L</original>
    <variation>A</variation>
    <location>
        <position position="312"/>
    </location>
</feature>
<feature type="mutagenesis site" description="Loss of interaction with TPL and loss of repression activity; when associated with A-310 and A-312." evidence="13">
    <original>L</original>
    <variation>A</variation>
    <location>
        <position position="314"/>
    </location>
</feature>
<feature type="sequence conflict" description="In Ref. 1; AAD45344 and 2; AAD37775." evidence="18" ref="1 2">
    <original>K</original>
    <variation>T</variation>
    <location>
        <position position="295"/>
    </location>
</feature>
<organism>
    <name type="scientific">Arabidopsis thaliana</name>
    <name type="common">Mouse-ear cress</name>
    <dbReference type="NCBI Taxonomy" id="3702"/>
    <lineage>
        <taxon>Eukaryota</taxon>
        <taxon>Viridiplantae</taxon>
        <taxon>Streptophyta</taxon>
        <taxon>Embryophyta</taxon>
        <taxon>Tracheophyta</taxon>
        <taxon>Spermatophyta</taxon>
        <taxon>Magnoliopsida</taxon>
        <taxon>eudicotyledons</taxon>
        <taxon>Gunneridae</taxon>
        <taxon>Pentapetalae</taxon>
        <taxon>rosids</taxon>
        <taxon>malvids</taxon>
        <taxon>Brassicales</taxon>
        <taxon>Brassicaceae</taxon>
        <taxon>Camelineae</taxon>
        <taxon>Arabidopsis</taxon>
    </lineage>
</organism>
<accession>O81836</accession>
<accession>A0MFA1</accession>
<accession>Q9S7B8</accession>
<sequence>MATSLFFMSTDQNSVGNPNDLLRNTRLVVNSSGEIRTETLKSRGRKPGSKTGQQKQKKPTLRGMGVAKLERQRIEEEKKQLAAATVGDTSSVASISNNATRLPVPVDPGVVLQGFPSSLGSNRIYCGGVGSGQVMIDPVISPWGFVETSSTTHELSSISNPQMFNASSNNRCDTCFKKKRLDGDQNNVVRSNGGGFSKYTMIPPPMNGYDQYLLQSDHHQRSQGFLYDHRIARAASVSASSTTINPYFNEATNHTGPMEEFGSYMEGNPRNGSGGVKEYEFFPGKYGERVSVVAKTSSLVGDCSPNTIDLSLKL</sequence>
<proteinExistence type="evidence at protein level"/>
<comment type="function">
    <text evidence="2 3 4 5 8 9 12 13">Transcriptional regulator of sporocyte development (PubMed:10465788). Acts as an adapter-like transcriptional repressor recruiting TPL/TPR corepressors to inhibit TCP transcription factors (PubMed:25378179). Required for nucellus and embryo sac development (PubMed:10500234). Plays a central role in patterning both the proximal-distal and the adaxial-abaxial axes during ovule development (PubMed:12183381). Involved in establishing the prospective chalaza of the ovule and in controlling the cell number and the length of the funiculus, and is required for the development of the integuments (PubMed:10976054). Required, with BEL1, for cytokinin-induced PIN1 expression in ovules (PubMed:22786869). Involved in controlling stamen identity (PubMed:19726570). May also regulate the morphology of lateral organs by repressing auxin production (PubMed:18557819).</text>
</comment>
<comment type="subunit">
    <text evidence="7 13 14">Homodimer and heterodimer with SPEARs (PubMed:25527103). Interacts in vitro with YAB1, YAB3 and YAB4 (PubMed:15299139). Interacts (via EAR motif) with TPL, TPR1, TPR2, TPR3 and TPR4 (PubMed:25378179, PubMed:25527103). Interacts with SPEAR1, SPEAR2, SPEAR3, SPEAR4, TCP1, TCP6, TCP8, TCP9, TCP11, TCP15, TCP20, TCP21 and TCP23 (PubMed:25527103). Interacts with TCP2, TCP3, TCP4, TCP5, TCP10, TCP13, TCP17 and TCP24 (PubMed:25378179, PubMed:25527103).</text>
</comment>
<comment type="interaction">
    <interactant intactId="EBI-1113588">
        <id>O81836</id>
    </interactant>
    <interactant intactId="EBI-4424877">
        <id>Q9S7W5</id>
        <label>TCP13</label>
    </interactant>
    <organismsDiffer>false</organismsDiffer>
    <experiments>3</experiments>
</comment>
<comment type="interaction">
    <interactant intactId="EBI-1113588">
        <id>O81836</id>
    </interactant>
    <interactant intactId="EBI-4424563">
        <id>Q93Z00</id>
        <label>TCP14</label>
    </interactant>
    <organismsDiffer>false</organismsDiffer>
    <experiments>3</experiments>
</comment>
<comment type="interaction">
    <interactant intactId="EBI-1113588">
        <id>O81836</id>
    </interactant>
    <interactant intactId="EBI-4426144">
        <id>Q9C9L2</id>
        <label>TCP15</label>
    </interactant>
    <organismsDiffer>false</organismsDiffer>
    <experiments>3</experiments>
</comment>
<comment type="interaction">
    <interactant intactId="EBI-1113588">
        <id>O81836</id>
    </interactant>
    <interactant intactId="EBI-1113627">
        <id>O22152</id>
        <label>YAB1</label>
    </interactant>
    <organismsDiffer>false</organismsDiffer>
    <experiments>8</experiments>
</comment>
<comment type="interaction">
    <interactant intactId="EBI-1113588">
        <id>O81836</id>
    </interactant>
    <interactant intactId="EBI-1115657">
        <id>Q9XFB1</id>
        <label>YAB3</label>
    </interactant>
    <organismsDiffer>false</organismsDiffer>
    <experiments>3</experiments>
</comment>
<comment type="interaction">
    <interactant intactId="EBI-1113588">
        <id>O81836</id>
    </interactant>
    <interactant intactId="EBI-1115523">
        <id>Q9LDT3</id>
        <label>YAB4</label>
    </interactant>
    <organismsDiffer>false</organismsDiffer>
    <experiments>3</experiments>
</comment>
<comment type="subcellular location">
    <subcellularLocation>
        <location evidence="2">Nucleus</location>
    </subcellularLocation>
</comment>
<comment type="tissue specificity">
    <text evidence="2 3">Expressed in flower buds (PubMed:10465788, PubMed:10500234). Not found in leaves, siliques and stems (PubMed:10465788). Detected in rosette leaves, stem tissue and seedlings (PubMed:10500234).</text>
</comment>
<comment type="developmental stage">
    <text evidence="2 13">Expressed during microsporogenesis and megasoprogenesis (PubMed:10465788). Expressed during ovule development (PubMed:25378179).</text>
</comment>
<comment type="induction">
    <text evidence="6 10 11">Up-regulated by the transcription factor AGAMOUS (PubMed:15254538). Regulated by ATXR3/SDG2 via chromatin methylation (PubMed:21037105). Triggered by TGA9 and TGA10 in anthers (PubMed:20805327).</text>
</comment>
<comment type="domain">
    <text evidence="13">Contains 1 EAR motif required for the interaction with TPL and TPRs (PubMed:25378179).</text>
</comment>
<comment type="disruption phenotype">
    <text evidence="2">Complete male and female sterility.</text>
</comment>
<comment type="similarity">
    <text>Belongs to the NOZZLE family.</text>
</comment>
<comment type="sequence caution" evidence="18">
    <conflict type="erroneous termination">
        <sequence resource="EMBL-CDS" id="ABK28652"/>
    </conflict>
    <text>Extended C-terminus.</text>
</comment>
<protein>
    <recommendedName>
        <fullName evidence="15">Protein SPOROCYTELESS</fullName>
    </recommendedName>
    <alternativeName>
        <fullName evidence="16">Protein NOZZLE</fullName>
    </alternativeName>
    <alternativeName>
        <fullName evidence="17">Transcription factor SPL</fullName>
    </alternativeName>
</protein>
<reference key="1">
    <citation type="journal article" date="1999" name="Genes Dev.">
        <title>The SPOROCYTELESS gene of Arabidopsis is required for initiation of sporogenesis and encodes a novel nuclear protein.</title>
        <authorList>
            <person name="Yang W.C."/>
            <person name="Ye D."/>
            <person name="Xu J."/>
            <person name="Sundaresan V."/>
        </authorList>
    </citation>
    <scope>NUCLEOTIDE SEQUENCE [MRNA]</scope>
    <scope>FUNCTION</scope>
    <scope>DISRUPTION PHENOTYPE</scope>
    <scope>SUBCELLULAR LOCATION</scope>
    <scope>TISSUE SPECIFICITY</scope>
    <scope>DEVELOPMENTAL STAGE</scope>
    <source>
        <strain>cv. Landsberg erecta</strain>
    </source>
</reference>
<reference key="2">
    <citation type="journal article" date="1999" name="Proc. Natl. Acad. Sci. U.S.A.">
        <title>Molecular analysis of NOZZLE, a gene involved in pattern formation and early sporogenesis during sex organ development in Arabidopsis thaliana.</title>
        <authorList>
            <person name="Schiefthaler U."/>
            <person name="Balasubramanian S."/>
            <person name="Sieber P."/>
            <person name="Chevalier D."/>
            <person name="Wisman E."/>
            <person name="Schneitz K."/>
        </authorList>
    </citation>
    <scope>NUCLEOTIDE SEQUENCE [GENOMIC DNA]</scope>
    <scope>FUNCTION</scope>
    <scope>TISSUE SPECIFICITY</scope>
    <source>
        <strain>cv. Landsberg erecta</strain>
    </source>
</reference>
<reference key="3">
    <citation type="journal article" date="1999" name="Nature">
        <title>Sequence and analysis of chromosome 4 of the plant Arabidopsis thaliana.</title>
        <authorList>
            <person name="Mayer K.F.X."/>
            <person name="Schueller C."/>
            <person name="Wambutt R."/>
            <person name="Murphy G."/>
            <person name="Volckaert G."/>
            <person name="Pohl T."/>
            <person name="Duesterhoeft A."/>
            <person name="Stiekema W."/>
            <person name="Entian K.-D."/>
            <person name="Terryn N."/>
            <person name="Harris B."/>
            <person name="Ansorge W."/>
            <person name="Brandt P."/>
            <person name="Grivell L.A."/>
            <person name="Rieger M."/>
            <person name="Weichselgartner M."/>
            <person name="de Simone V."/>
            <person name="Obermaier B."/>
            <person name="Mache R."/>
            <person name="Mueller M."/>
            <person name="Kreis M."/>
            <person name="Delseny M."/>
            <person name="Puigdomenech P."/>
            <person name="Watson M."/>
            <person name="Schmidtheini T."/>
            <person name="Reichert B."/>
            <person name="Portetelle D."/>
            <person name="Perez-Alonso M."/>
            <person name="Boutry M."/>
            <person name="Bancroft I."/>
            <person name="Vos P."/>
            <person name="Hoheisel J."/>
            <person name="Zimmermann W."/>
            <person name="Wedler H."/>
            <person name="Ridley P."/>
            <person name="Langham S.-A."/>
            <person name="McCullagh B."/>
            <person name="Bilham L."/>
            <person name="Robben J."/>
            <person name="van der Schueren J."/>
            <person name="Grymonprez B."/>
            <person name="Chuang Y.-J."/>
            <person name="Vandenbussche F."/>
            <person name="Braeken M."/>
            <person name="Weltjens I."/>
            <person name="Voet M."/>
            <person name="Bastiaens I."/>
            <person name="Aert R."/>
            <person name="Defoor E."/>
            <person name="Weitzenegger T."/>
            <person name="Bothe G."/>
            <person name="Ramsperger U."/>
            <person name="Hilbert H."/>
            <person name="Braun M."/>
            <person name="Holzer E."/>
            <person name="Brandt A."/>
            <person name="Peters S."/>
            <person name="van Staveren M."/>
            <person name="Dirkse W."/>
            <person name="Mooijman P."/>
            <person name="Klein Lankhorst R."/>
            <person name="Rose M."/>
            <person name="Hauf J."/>
            <person name="Koetter P."/>
            <person name="Berneiser S."/>
            <person name="Hempel S."/>
            <person name="Feldpausch M."/>
            <person name="Lamberth S."/>
            <person name="Van den Daele H."/>
            <person name="De Keyser A."/>
            <person name="Buysshaert C."/>
            <person name="Gielen J."/>
            <person name="Villarroel R."/>
            <person name="De Clercq R."/>
            <person name="van Montagu M."/>
            <person name="Rogers J."/>
            <person name="Cronin A."/>
            <person name="Quail M.A."/>
            <person name="Bray-Allen S."/>
            <person name="Clark L."/>
            <person name="Doggett J."/>
            <person name="Hall S."/>
            <person name="Kay M."/>
            <person name="Lennard N."/>
            <person name="McLay K."/>
            <person name="Mayes R."/>
            <person name="Pettett A."/>
            <person name="Rajandream M.A."/>
            <person name="Lyne M."/>
            <person name="Benes V."/>
            <person name="Rechmann S."/>
            <person name="Borkova D."/>
            <person name="Bloecker H."/>
            <person name="Scharfe M."/>
            <person name="Grimm M."/>
            <person name="Loehnert T.-H."/>
            <person name="Dose S."/>
            <person name="de Haan M."/>
            <person name="Maarse A.C."/>
            <person name="Schaefer M."/>
            <person name="Mueller-Auer S."/>
            <person name="Gabel C."/>
            <person name="Fuchs M."/>
            <person name="Fartmann B."/>
            <person name="Granderath K."/>
            <person name="Dauner D."/>
            <person name="Herzl A."/>
            <person name="Neumann S."/>
            <person name="Argiriou A."/>
            <person name="Vitale D."/>
            <person name="Liguori R."/>
            <person name="Piravandi E."/>
            <person name="Massenet O."/>
            <person name="Quigley F."/>
            <person name="Clabauld G."/>
            <person name="Muendlein A."/>
            <person name="Felber R."/>
            <person name="Schnabl S."/>
            <person name="Hiller R."/>
            <person name="Schmidt W."/>
            <person name="Lecharny A."/>
            <person name="Aubourg S."/>
            <person name="Chefdor F."/>
            <person name="Cooke R."/>
            <person name="Berger C."/>
            <person name="Monfort A."/>
            <person name="Casacuberta E."/>
            <person name="Gibbons T."/>
            <person name="Weber N."/>
            <person name="Vandenbol M."/>
            <person name="Bargues M."/>
            <person name="Terol J."/>
            <person name="Torres A."/>
            <person name="Perez-Perez A."/>
            <person name="Purnelle B."/>
            <person name="Bent E."/>
            <person name="Johnson S."/>
            <person name="Tacon D."/>
            <person name="Jesse T."/>
            <person name="Heijnen L."/>
            <person name="Schwarz S."/>
            <person name="Scholler P."/>
            <person name="Heber S."/>
            <person name="Francs P."/>
            <person name="Bielke C."/>
            <person name="Frishman D."/>
            <person name="Haase D."/>
            <person name="Lemcke K."/>
            <person name="Mewes H.-W."/>
            <person name="Stocker S."/>
            <person name="Zaccaria P."/>
            <person name="Bevan M."/>
            <person name="Wilson R.K."/>
            <person name="de la Bastide M."/>
            <person name="Habermann K."/>
            <person name="Parnell L."/>
            <person name="Dedhia N."/>
            <person name="Gnoj L."/>
            <person name="Schutz K."/>
            <person name="Huang E."/>
            <person name="Spiegel L."/>
            <person name="Sekhon M."/>
            <person name="Murray J."/>
            <person name="Sheet P."/>
            <person name="Cordes M."/>
            <person name="Abu-Threideh J."/>
            <person name="Stoneking T."/>
            <person name="Kalicki J."/>
            <person name="Graves T."/>
            <person name="Harmon G."/>
            <person name="Edwards J."/>
            <person name="Latreille P."/>
            <person name="Courtney L."/>
            <person name="Cloud J."/>
            <person name="Abbott A."/>
            <person name="Scott K."/>
            <person name="Johnson D."/>
            <person name="Minx P."/>
            <person name="Bentley D."/>
            <person name="Fulton B."/>
            <person name="Miller N."/>
            <person name="Greco T."/>
            <person name="Kemp K."/>
            <person name="Kramer J."/>
            <person name="Fulton L."/>
            <person name="Mardis E."/>
            <person name="Dante M."/>
            <person name="Pepin K."/>
            <person name="Hillier L.W."/>
            <person name="Nelson J."/>
            <person name="Spieth J."/>
            <person name="Ryan E."/>
            <person name="Andrews S."/>
            <person name="Geisel C."/>
            <person name="Layman D."/>
            <person name="Du H."/>
            <person name="Ali J."/>
            <person name="Berghoff A."/>
            <person name="Jones K."/>
            <person name="Drone K."/>
            <person name="Cotton M."/>
            <person name="Joshu C."/>
            <person name="Antonoiu B."/>
            <person name="Zidanic M."/>
            <person name="Strong C."/>
            <person name="Sun H."/>
            <person name="Lamar B."/>
            <person name="Yordan C."/>
            <person name="Ma P."/>
            <person name="Zhong J."/>
            <person name="Preston R."/>
            <person name="Vil D."/>
            <person name="Shekher M."/>
            <person name="Matero A."/>
            <person name="Shah R."/>
            <person name="Swaby I.K."/>
            <person name="O'Shaughnessy A."/>
            <person name="Rodriguez M."/>
            <person name="Hoffman J."/>
            <person name="Till S."/>
            <person name="Granat S."/>
            <person name="Shohdy N."/>
            <person name="Hasegawa A."/>
            <person name="Hameed A."/>
            <person name="Lodhi M."/>
            <person name="Johnson A."/>
            <person name="Chen E."/>
            <person name="Marra M.A."/>
            <person name="Martienssen R."/>
            <person name="McCombie W.R."/>
        </authorList>
    </citation>
    <scope>NUCLEOTIDE SEQUENCE [LARGE SCALE GENOMIC DNA]</scope>
    <source>
        <strain>cv. Columbia</strain>
    </source>
</reference>
<reference key="4">
    <citation type="journal article" date="2017" name="Plant J.">
        <title>Araport11: a complete reannotation of the Arabidopsis thaliana reference genome.</title>
        <authorList>
            <person name="Cheng C.Y."/>
            <person name="Krishnakumar V."/>
            <person name="Chan A.P."/>
            <person name="Thibaud-Nissen F."/>
            <person name="Schobel S."/>
            <person name="Town C.D."/>
        </authorList>
    </citation>
    <scope>GENOME REANNOTATION</scope>
    <source>
        <strain>cv. Columbia</strain>
    </source>
</reference>
<reference key="5">
    <citation type="journal article" date="2006" name="Plant Biotechnol. J.">
        <title>Simultaneous high-throughput recombinational cloning of open reading frames in closed and open configurations.</title>
        <authorList>
            <person name="Underwood B.A."/>
            <person name="Vanderhaeghen R."/>
            <person name="Whitford R."/>
            <person name="Town C.D."/>
            <person name="Hilson P."/>
        </authorList>
    </citation>
    <scope>NUCLEOTIDE SEQUENCE [LARGE SCALE MRNA]</scope>
    <source>
        <strain>cv. Columbia</strain>
    </source>
</reference>
<reference key="6">
    <citation type="submission" date="2009-03" db="EMBL/GenBank/DDBJ databases">
        <title>ORF cloning and analysis of Arabidopsis transcription factor genes.</title>
        <authorList>
            <person name="Fujita M."/>
            <person name="Mizukado S."/>
            <person name="Seki M."/>
            <person name="Shinozaki K."/>
            <person name="Mitsuda N."/>
            <person name="Takiguchi Y."/>
            <person name="Takagi M."/>
        </authorList>
    </citation>
    <scope>NUCLEOTIDE SEQUENCE [LARGE SCALE MRNA]</scope>
    <source>
        <strain>cv. Columbia</strain>
    </source>
</reference>
<reference key="7">
    <citation type="journal article" date="2000" name="Development">
        <title>NOZZLE regulates proximal-distal pattern formation, cell proliferation and early sporogenesis during ovule development in Arabidopsis thaliana.</title>
        <authorList>
            <person name="Balasubramanian S."/>
            <person name="Schneitz K."/>
        </authorList>
    </citation>
    <scope>FUNCTION</scope>
</reference>
<reference key="8">
    <citation type="journal article" date="2002" name="Development">
        <title>NOZZLE links proximal-distal and adaxial-abaxial pattern formation during ovule development in Arabidopsis thaliana.</title>
        <authorList>
            <person name="Balasubramanian S."/>
            <person name="Schneitz K."/>
        </authorList>
    </citation>
    <scope>FUNCTION</scope>
</reference>
<reference key="9">
    <citation type="journal article" date="2004" name="Nature">
        <title>The homeotic protein AGAMOUS controls microsporogenesis by regulation of SPOROCYTELESS.</title>
        <authorList>
            <person name="Ito T."/>
            <person name="Wellmer F."/>
            <person name="Yu H."/>
            <person name="Das P."/>
            <person name="Ito N."/>
            <person name="Alves-Ferreira M."/>
            <person name="Riechmann J.L."/>
            <person name="Meyerowitz E.M."/>
        </authorList>
    </citation>
    <scope>INDUCTION BY AGAMOUS</scope>
</reference>
<reference key="10">
    <citation type="journal article" date="2004" name="Plant Physiol.">
        <title>Organ polarity in Arabidopsis. NOZZLE physically interacts with members of the YABBY family.</title>
        <authorList>
            <person name="Sieber P."/>
            <person name="Petrascheck M."/>
            <person name="Barberis A."/>
            <person name="Schneitz K."/>
        </authorList>
    </citation>
    <scope>INTERACTION WITH YAB1; YAB3 AND YAB4</scope>
</reference>
<reference key="11">
    <citation type="journal article" date="2008" name="New Phytol.">
        <title>SPOROCYTELESS modulates YUCCA expression to regulate the development of lateral organs in Arabidopsis.</title>
        <authorList>
            <person name="Li L.C."/>
            <person name="Qin G.J."/>
            <person name="Tsuge T."/>
            <person name="Hou X.H."/>
            <person name="Ding M.Y."/>
            <person name="Aoyama T."/>
            <person name="Oka A."/>
            <person name="Chen Z."/>
            <person name="Gu H."/>
            <person name="Zhao Y."/>
            <person name="Qu L.J."/>
        </authorList>
    </citation>
    <scope>FUNCTION</scope>
</reference>
<reference key="12">
    <citation type="journal article" date="2009" name="Plant Physiol.">
        <title>The SPOROCYTELESS/NOZZLE gene is involved in controlling stamen identity in Arabidopsis.</title>
        <authorList>
            <person name="Liu X."/>
            <person name="Huang J."/>
            <person name="Parameswaran S."/>
            <person name="Ito T."/>
            <person name="Seubert B."/>
            <person name="Auer M."/>
            <person name="Rymaszewski A."/>
            <person name="Jia G."/>
            <person name="Owen H.A."/>
            <person name="Zhao D."/>
        </authorList>
    </citation>
    <scope>FUNCTION</scope>
</reference>
<reference key="13">
    <citation type="journal article" date="2010" name="Plant Cell">
        <title>Arabidopsis SET DOMAIN GROUP2 is required for H3K4 trimethylation and is crucial for both sporophyte and gametophyte development.</title>
        <authorList>
            <person name="Berr A."/>
            <person name="McCallum E.J."/>
            <person name="Menard R."/>
            <person name="Meyer D."/>
            <person name="Fuchs J."/>
            <person name="Dong A."/>
            <person name="Shen W.H."/>
        </authorList>
    </citation>
    <scope>INDUCTION BY ATXR3/SDG2</scope>
</reference>
<reference key="14">
    <citation type="journal article" date="2010" name="Plant Physiol.">
        <title>Arabidopsis basic leucine-zipper transcription factors TGA9 and TGA10 interact with floral glutaredoxins ROXY1 and ROXY2 and are redundantly required for anther development.</title>
        <authorList>
            <person name="Murmu J."/>
            <person name="Bush M.J."/>
            <person name="Delong C."/>
            <person name="Li S."/>
            <person name="Xu M."/>
            <person name="Khan M."/>
            <person name="Malcolmson C."/>
            <person name="Fobert P.R."/>
            <person name="Zachgo S."/>
            <person name="Hepworth S.R."/>
        </authorList>
    </citation>
    <scope>INDUCTION BY TGA9 AND TGA10</scope>
    <source>
        <strain>cv. Columbia</strain>
    </source>
</reference>
<reference key="15">
    <citation type="journal article" date="2012" name="Plant Cell">
        <title>The transcription factors BEL1 and SPL are required for cytokinin and auxin signaling during ovule development in Arabidopsis.</title>
        <authorList>
            <person name="Bencivenga S."/>
            <person name="Simonini S."/>
            <person name="Benkova E."/>
            <person name="Colombo L."/>
        </authorList>
    </citation>
    <scope>FUNCTION</scope>
</reference>
<reference key="16">
    <citation type="journal article" date="2014" name="J. Genet. Genomics">
        <title>SPOROCYTELESS is a novel embryophyte-specific transcription repressor that interacts with TPL and TCP proteins in Arabidopsis.</title>
        <authorList>
            <person name="Chen G.H."/>
            <person name="Sun J.Y."/>
            <person name="Liu M."/>
            <person name="Liu J."/>
            <person name="Yang W.C."/>
        </authorList>
    </citation>
    <scope>FUNCTION</scope>
    <scope>INTERACTION WITH TPL; TPR1; TPR2; TPR3; TPR4; TCP1; TCP2; TCP3; TCP4; TCP5; TCP6; TCP8; TCP9; TCP10; TCP11; TCP15; TCP20; TCP21; TCP23; TCP24; SPEAR1; SPEAR2; SPEAR3 AND SPEAR4</scope>
    <scope>DOMAIN</scope>
    <scope>SUBUNIT</scope>
</reference>
<reference key="17">
    <citation type="journal article" date="2015" name="Cell Res.">
        <title>The molecular mechanism of sporocyteless/nozzle in controlling Arabidopsis ovule development.</title>
        <authorList>
            <person name="Wei B."/>
            <person name="Zhang J."/>
            <person name="Pang C."/>
            <person name="Yu H."/>
            <person name="Guo D."/>
            <person name="Jiang H."/>
            <person name="Ding M."/>
            <person name="Chen Z."/>
            <person name="Tao Q."/>
            <person name="Gu H."/>
            <person name="Qu L.J."/>
            <person name="Qin G."/>
        </authorList>
    </citation>
    <scope>FUNCTION</scope>
    <scope>DOMAIN</scope>
    <scope>MUTAGENESIS OF LEU-310; LEU-312 AND LEU-314</scope>
    <scope>INTERACTION WITH TPL; TPR1; TPR2; TPR3; TPR4; TCP2; TCP3; TCP4; TCP5; TCP10; TCP13; TCP17 AND TCP24</scope>
    <scope>DEVELOPMENTAL STAGE</scope>
</reference>
<evidence type="ECO:0000256" key="1">
    <source>
        <dbReference type="SAM" id="MobiDB-lite"/>
    </source>
</evidence>
<evidence type="ECO:0000269" key="2">
    <source>
    </source>
</evidence>
<evidence type="ECO:0000269" key="3">
    <source>
    </source>
</evidence>
<evidence type="ECO:0000269" key="4">
    <source>
    </source>
</evidence>
<evidence type="ECO:0000269" key="5">
    <source>
    </source>
</evidence>
<evidence type="ECO:0000269" key="6">
    <source>
    </source>
</evidence>
<evidence type="ECO:0000269" key="7">
    <source>
    </source>
</evidence>
<evidence type="ECO:0000269" key="8">
    <source>
    </source>
</evidence>
<evidence type="ECO:0000269" key="9">
    <source>
    </source>
</evidence>
<evidence type="ECO:0000269" key="10">
    <source>
    </source>
</evidence>
<evidence type="ECO:0000269" key="11">
    <source>
    </source>
</evidence>
<evidence type="ECO:0000269" key="12">
    <source>
    </source>
</evidence>
<evidence type="ECO:0000269" key="13">
    <source>
    </source>
</evidence>
<evidence type="ECO:0000269" key="14">
    <source>
    </source>
</evidence>
<evidence type="ECO:0000303" key="15">
    <source>
    </source>
</evidence>
<evidence type="ECO:0000303" key="16">
    <source>
    </source>
</evidence>
<evidence type="ECO:0000303" key="17">
    <source ref="6"/>
</evidence>
<evidence type="ECO:0000305" key="18"/>
<evidence type="ECO:0000312" key="19">
    <source>
        <dbReference type="Araport" id="AT4G27330"/>
    </source>
</evidence>
<evidence type="ECO:0000312" key="20">
    <source>
        <dbReference type="EMBL" id="AL078467"/>
    </source>
</evidence>
<gene>
    <name evidence="15" type="primary">SPL</name>
    <name evidence="16" type="synonym">NZZ</name>
    <name evidence="19" type="ordered locus">At4g27330</name>
    <name evidence="20" type="ORF">F27G19.11</name>
</gene>